<organism>
    <name type="scientific">Bos taurus</name>
    <name type="common">Bovine</name>
    <dbReference type="NCBI Taxonomy" id="9913"/>
    <lineage>
        <taxon>Eukaryota</taxon>
        <taxon>Metazoa</taxon>
        <taxon>Chordata</taxon>
        <taxon>Craniata</taxon>
        <taxon>Vertebrata</taxon>
        <taxon>Euteleostomi</taxon>
        <taxon>Mammalia</taxon>
        <taxon>Eutheria</taxon>
        <taxon>Laurasiatheria</taxon>
        <taxon>Artiodactyla</taxon>
        <taxon>Ruminantia</taxon>
        <taxon>Pecora</taxon>
        <taxon>Bovidae</taxon>
        <taxon>Bovinae</taxon>
        <taxon>Bos</taxon>
    </lineage>
</organism>
<reference key="1">
    <citation type="journal article" date="1997" name="Cell">
        <title>A novel Rab5 GDP/GTP exchange factor complexed to Rabaptin-5 links nucleotide exchange to effector recruitment and function.</title>
        <authorList>
            <person name="Horiuchi H."/>
            <person name="Lippe R."/>
            <person name="McBride H.M."/>
            <person name="Rubino M."/>
            <person name="Woodman P."/>
            <person name="Stenmark H."/>
            <person name="Rybin V."/>
            <person name="Wilm M."/>
            <person name="Ashman K."/>
            <person name="Mann M."/>
            <person name="Zerial M."/>
        </authorList>
    </citation>
    <scope>NUCLEOTIDE SEQUENCE [MRNA]</scope>
    <scope>PROTEIN SEQUENCE OF 50-60; 142-148; 181-189; 272-283; 332-341 AND 414-427</scope>
    <scope>FUNCTION</scope>
    <scope>INTERACTION WITH RABEP1</scope>
    <scope>IDENTIFICATION BY MASS SPECTROMETRY</scope>
    <scope>SUBCELLULAR LOCATION</scope>
    <scope>TISSUE SPECIFICITY</scope>
    <source>
        <tissue>Brain</tissue>
    </source>
</reference>
<reference key="2">
    <citation type="journal article" date="2006" name="Nat. Struct. Mol. Biol.">
        <title>Structural basis for ubiquitin recognition and autoubiquitination by Rabex-5.</title>
        <authorList>
            <person name="Lee S."/>
            <person name="Tsai Y.C."/>
            <person name="Mattera R."/>
            <person name="Smith W.J."/>
            <person name="Kostelansky M.S."/>
            <person name="Weissman A.M."/>
            <person name="Bonifacino J.S."/>
            <person name="Hurley J.H."/>
        </authorList>
    </citation>
    <scope>X-RAY CRYSTALLOGRAPHY (2.8 ANGSTROMS) OF 9-73 IN COMPLEX WITH UBIQUITIN</scope>
    <scope>FUNCTION</scope>
    <scope>UBIQUITINATION</scope>
    <scope>MUTAGENESIS OF TYR-25; TYR-26; LEU-57 AND ALA-58</scope>
</reference>
<evidence type="ECO:0000250" key="1"/>
<evidence type="ECO:0000250" key="2">
    <source>
        <dbReference type="UniProtKB" id="Q9JM13"/>
    </source>
</evidence>
<evidence type="ECO:0000250" key="3">
    <source>
        <dbReference type="UniProtKB" id="Q9UJ41"/>
    </source>
</evidence>
<evidence type="ECO:0000255" key="4"/>
<evidence type="ECO:0000255" key="5">
    <source>
        <dbReference type="PROSITE-ProRule" id="PRU00451"/>
    </source>
</evidence>
<evidence type="ECO:0000255" key="6">
    <source>
        <dbReference type="PROSITE-ProRule" id="PRU00550"/>
    </source>
</evidence>
<evidence type="ECO:0000256" key="7">
    <source>
        <dbReference type="SAM" id="MobiDB-lite"/>
    </source>
</evidence>
<evidence type="ECO:0000269" key="8">
    <source>
    </source>
</evidence>
<evidence type="ECO:0000269" key="9">
    <source>
    </source>
</evidence>
<evidence type="ECO:0007829" key="10">
    <source>
        <dbReference type="PDB" id="2FIF"/>
    </source>
</evidence>
<keyword id="KW-0002">3D-structure</keyword>
<keyword id="KW-0007">Acetylation</keyword>
<keyword id="KW-0175">Coiled coil</keyword>
<keyword id="KW-0963">Cytoplasm</keyword>
<keyword id="KW-0903">Direct protein sequencing</keyword>
<keyword id="KW-0254">Endocytosis</keyword>
<keyword id="KW-0967">Endosome</keyword>
<keyword id="KW-0479">Metal-binding</keyword>
<keyword id="KW-0597">Phosphoprotein</keyword>
<keyword id="KW-0653">Protein transport</keyword>
<keyword id="KW-1185">Reference proteome</keyword>
<keyword id="KW-0813">Transport</keyword>
<keyword id="KW-0832">Ubl conjugation</keyword>
<keyword id="KW-0833">Ubl conjugation pathway</keyword>
<keyword id="KW-0862">Zinc</keyword>
<keyword id="KW-0863">Zinc-finger</keyword>
<comment type="function">
    <text evidence="8 9">Rab effector protein acting as linker between gamma-adaptin and RAB5A. Involved in endocytic membrane fusion and membrane trafficking of recycling endosomes. Stimulates nucleotide exchange on RAB5A. Can act as a ubiquitin ligase.</text>
</comment>
<comment type="subunit">
    <text evidence="1">Heterodimer with RABEP1. The heterodimer binds RAB4A and RAB5A that have been activated by GTP-binding. Binds TSC2, GGA1, GGA2, GGA3, AP1G1 and AP1G2 (By similarity). Interacts with RAB21, and with 100-fold lower affinity also with RAB22 (By similarity). Interacts with ubiquitinated EGFR. Interacts with RGS14; the interaction is GTP-dependent (By similarity).</text>
</comment>
<comment type="interaction">
    <interactant intactId="EBI-447376">
        <id>O18973</id>
    </interactant>
    <interactant intactId="EBI-413053">
        <id>P62990</id>
        <label>UBC</label>
    </interactant>
    <organismsDiffer>false</organismsDiffer>
    <experiments>3</experiments>
</comment>
<comment type="interaction">
    <interactant intactId="EBI-447376">
        <id>O18973</id>
    </interactant>
    <interactant intactId="EBI-447141">
        <id>Q9UJY5</id>
        <label>GGA1</label>
    </interactant>
    <organismsDiffer>true</organismsDiffer>
    <experiments>2</experiments>
</comment>
<comment type="subcellular location">
    <subcellularLocation>
        <location evidence="9">Cytoplasm</location>
    </subcellularLocation>
    <subcellularLocation>
        <location evidence="9">Early endosome</location>
    </subcellularLocation>
    <subcellularLocation>
        <location evidence="9">Recycling endosome</location>
    </subcellularLocation>
</comment>
<comment type="tissue specificity">
    <text evidence="9">Detected in brain.</text>
</comment>
<comment type="PTM">
    <text>Monoubiquitinated.</text>
</comment>
<protein>
    <recommendedName>
        <fullName>Rab5 GDP/GTP exchange factor</fullName>
    </recommendedName>
    <alternativeName>
        <fullName>Rabex-5</fullName>
    </alternativeName>
</protein>
<proteinExistence type="evidence at protein level"/>
<sequence>MSLKSERRGIHVDQSELLCKKGCGYYGNPAWQGFCSKCWREEYHKARQKQIQEDWELAERLQREEEEAFASSQSSQGAQSLTFSKFEEKKTNEKTRKVTTVKKFFSASSRVGAKKAEIQEAKAPSPSINRQTSIETDRVSKEFIEFLKTFHKTGQEIYKQTKLFLEAMHYKRDLSIEEQSECTQDFYQNVAERMQTRGKVPPERVEKIMDQIEKYIMTRLYKYVFCPETTDDEKKDLAIQKRIRALHWVTPQMLCVPVNEEIPEVSDMVVKAITDIIEMDSKRVPRDKLACITKCSKHIFNAIKITKNEPASADDFLPTLIYIVLKGNPPRLQSNIQYITRFCNPSRLMTGEDGYYFTNLCCAVAFIEKLDAQSLNLSQEDFDRYMSGQTSPRKQESENWSPDACLGVKQMYKNLDLLSQLNERQERIMNEAKKLEKDLIDWTDGIAKEVQDIVEKYPLEIRPPNQSVAAIDSENVENDKLPPPLQPQVYAG</sequence>
<accession>O18973</accession>
<name>RABX5_BOVIN</name>
<dbReference type="EMBL" id="AJ001119">
    <property type="protein sequence ID" value="CAA04545.1"/>
    <property type="molecule type" value="mRNA"/>
</dbReference>
<dbReference type="RefSeq" id="NP_777016.1">
    <property type="nucleotide sequence ID" value="NM_174591.1"/>
</dbReference>
<dbReference type="PDB" id="2FID">
    <property type="method" value="X-ray"/>
    <property type="resolution" value="2.80 A"/>
    <property type="chains" value="B=9-73"/>
</dbReference>
<dbReference type="PDB" id="2FIF">
    <property type="method" value="X-ray"/>
    <property type="resolution" value="2.49 A"/>
    <property type="chains" value="B/D/F=9-73"/>
</dbReference>
<dbReference type="PDBsum" id="2FID"/>
<dbReference type="PDBsum" id="2FIF"/>
<dbReference type="SMR" id="O18973"/>
<dbReference type="BioGRID" id="159596">
    <property type="interactions" value="4"/>
</dbReference>
<dbReference type="DIP" id="DIP-29059N"/>
<dbReference type="FunCoup" id="O18973">
    <property type="interactions" value="779"/>
</dbReference>
<dbReference type="IntAct" id="O18973">
    <property type="interactions" value="8"/>
</dbReference>
<dbReference type="STRING" id="9913.ENSBTAP00000005011"/>
<dbReference type="PaxDb" id="9913-ENSBTAP00000005011"/>
<dbReference type="GeneID" id="282335"/>
<dbReference type="KEGG" id="bta:282335"/>
<dbReference type="CTD" id="27342"/>
<dbReference type="eggNOG" id="KOG2319">
    <property type="taxonomic scope" value="Eukaryota"/>
</dbReference>
<dbReference type="eggNOG" id="KOG3173">
    <property type="taxonomic scope" value="Eukaryota"/>
</dbReference>
<dbReference type="HOGENOM" id="CLU_018416_1_1_1"/>
<dbReference type="InParanoid" id="O18973"/>
<dbReference type="OrthoDB" id="300289at2759"/>
<dbReference type="EvolutionaryTrace" id="O18973"/>
<dbReference type="Proteomes" id="UP000009136">
    <property type="component" value="Unplaced"/>
</dbReference>
<dbReference type="GO" id="GO:0005829">
    <property type="term" value="C:cytosol"/>
    <property type="evidence" value="ECO:0000318"/>
    <property type="project" value="GO_Central"/>
</dbReference>
<dbReference type="GO" id="GO:0005769">
    <property type="term" value="C:early endosome"/>
    <property type="evidence" value="ECO:0007669"/>
    <property type="project" value="UniProtKB-SubCell"/>
</dbReference>
<dbReference type="GO" id="GO:0030139">
    <property type="term" value="C:endocytic vesicle"/>
    <property type="evidence" value="ECO:0000318"/>
    <property type="project" value="GO_Central"/>
</dbReference>
<dbReference type="GO" id="GO:0055037">
    <property type="term" value="C:recycling endosome"/>
    <property type="evidence" value="ECO:0007669"/>
    <property type="project" value="UniProtKB-SubCell"/>
</dbReference>
<dbReference type="GO" id="GO:0003677">
    <property type="term" value="F:DNA binding"/>
    <property type="evidence" value="ECO:0007669"/>
    <property type="project" value="InterPro"/>
</dbReference>
<dbReference type="GO" id="GO:0005085">
    <property type="term" value="F:guanyl-nucleotide exchange factor activity"/>
    <property type="evidence" value="ECO:0000318"/>
    <property type="project" value="GO_Central"/>
</dbReference>
<dbReference type="GO" id="GO:0031267">
    <property type="term" value="F:small GTPase binding"/>
    <property type="evidence" value="ECO:0000318"/>
    <property type="project" value="GO_Central"/>
</dbReference>
<dbReference type="GO" id="GO:0008270">
    <property type="term" value="F:zinc ion binding"/>
    <property type="evidence" value="ECO:0007669"/>
    <property type="project" value="UniProtKB-KW"/>
</dbReference>
<dbReference type="GO" id="GO:0006897">
    <property type="term" value="P:endocytosis"/>
    <property type="evidence" value="ECO:0007669"/>
    <property type="project" value="UniProtKB-KW"/>
</dbReference>
<dbReference type="GO" id="GO:0015031">
    <property type="term" value="P:protein transport"/>
    <property type="evidence" value="ECO:0007669"/>
    <property type="project" value="UniProtKB-KW"/>
</dbReference>
<dbReference type="FunFam" id="1.10.246.120:FF:000002">
    <property type="entry name" value="rab5 GDP/GTP exchange factor isoform X1"/>
    <property type="match status" value="1"/>
</dbReference>
<dbReference type="FunFam" id="1.20.5.4770:FF:000002">
    <property type="entry name" value="rab5 GDP/GTP exchange factor isoform X1"/>
    <property type="match status" value="1"/>
</dbReference>
<dbReference type="FunFam" id="1.20.1050.80:FF:000003">
    <property type="entry name" value="rab5 GDP/GTP exchange factor isoform X2"/>
    <property type="match status" value="1"/>
</dbReference>
<dbReference type="Gene3D" id="1.10.246.120">
    <property type="match status" value="1"/>
</dbReference>
<dbReference type="Gene3D" id="1.20.5.4770">
    <property type="match status" value="1"/>
</dbReference>
<dbReference type="Gene3D" id="1.20.1050.80">
    <property type="entry name" value="VPS9 domain"/>
    <property type="match status" value="1"/>
</dbReference>
<dbReference type="InterPro" id="IPR041545">
    <property type="entry name" value="DUF5601"/>
</dbReference>
<dbReference type="InterPro" id="IPR003123">
    <property type="entry name" value="VPS9"/>
</dbReference>
<dbReference type="InterPro" id="IPR045046">
    <property type="entry name" value="Vps9-like"/>
</dbReference>
<dbReference type="InterPro" id="IPR037191">
    <property type="entry name" value="VPS9_dom_sf"/>
</dbReference>
<dbReference type="InterPro" id="IPR002653">
    <property type="entry name" value="Znf_A20"/>
</dbReference>
<dbReference type="PANTHER" id="PTHR23101">
    <property type="entry name" value="RAB GDP/GTP EXCHANGE FACTOR"/>
    <property type="match status" value="1"/>
</dbReference>
<dbReference type="PANTHER" id="PTHR23101:SF126">
    <property type="entry name" value="RAB5 GDP_GTP EXCHANGE FACTOR"/>
    <property type="match status" value="1"/>
</dbReference>
<dbReference type="Pfam" id="PF18151">
    <property type="entry name" value="DUF5601"/>
    <property type="match status" value="1"/>
</dbReference>
<dbReference type="Pfam" id="PF02204">
    <property type="entry name" value="VPS9"/>
    <property type="match status" value="1"/>
</dbReference>
<dbReference type="Pfam" id="PF01754">
    <property type="entry name" value="zf-A20"/>
    <property type="match status" value="1"/>
</dbReference>
<dbReference type="SMART" id="SM00167">
    <property type="entry name" value="VPS9"/>
    <property type="match status" value="1"/>
</dbReference>
<dbReference type="SMART" id="SM00259">
    <property type="entry name" value="ZnF_A20"/>
    <property type="match status" value="1"/>
</dbReference>
<dbReference type="SUPFAM" id="SSF57716">
    <property type="entry name" value="Glucocorticoid receptor-like (DNA-binding domain)"/>
    <property type="match status" value="1"/>
</dbReference>
<dbReference type="SUPFAM" id="SSF109993">
    <property type="entry name" value="VPS9 domain"/>
    <property type="match status" value="1"/>
</dbReference>
<dbReference type="PROSITE" id="PS51205">
    <property type="entry name" value="VPS9"/>
    <property type="match status" value="1"/>
</dbReference>
<dbReference type="PROSITE" id="PS51036">
    <property type="entry name" value="ZF_A20"/>
    <property type="match status" value="1"/>
</dbReference>
<feature type="chain" id="PRO_0000191314" description="Rab5 GDP/GTP exchange factor">
    <location>
        <begin position="1"/>
        <end position="492"/>
    </location>
</feature>
<feature type="domain" description="VPS9" evidence="6">
    <location>
        <begin position="233"/>
        <end position="376"/>
    </location>
</feature>
<feature type="zinc finger region" description="A20-type" evidence="5">
    <location>
        <begin position="13"/>
        <end position="47"/>
    </location>
</feature>
<feature type="region of interest" description="Interaction with ubiquitinated proteins">
    <location>
        <begin position="1"/>
        <end position="74"/>
    </location>
</feature>
<feature type="region of interest" description="Disordered" evidence="7">
    <location>
        <begin position="66"/>
        <end position="85"/>
    </location>
</feature>
<feature type="region of interest" description="Disordered" evidence="7">
    <location>
        <begin position="471"/>
        <end position="492"/>
    </location>
</feature>
<feature type="coiled-coil region" evidence="4">
    <location>
        <begin position="408"/>
        <end position="449"/>
    </location>
</feature>
<feature type="compositionally biased region" description="Low complexity" evidence="7">
    <location>
        <begin position="69"/>
        <end position="84"/>
    </location>
</feature>
<feature type="binding site" evidence="5">
    <location>
        <position position="19"/>
    </location>
    <ligand>
        <name>Zn(2+)</name>
        <dbReference type="ChEBI" id="CHEBI:29105"/>
    </ligand>
</feature>
<feature type="binding site" evidence="5">
    <location>
        <position position="23"/>
    </location>
    <ligand>
        <name>Zn(2+)</name>
        <dbReference type="ChEBI" id="CHEBI:29105"/>
    </ligand>
</feature>
<feature type="binding site" evidence="5">
    <location>
        <position position="35"/>
    </location>
    <ligand>
        <name>Zn(2+)</name>
        <dbReference type="ChEBI" id="CHEBI:29105"/>
    </ligand>
</feature>
<feature type="binding site" evidence="5">
    <location>
        <position position="38"/>
    </location>
    <ligand>
        <name>Zn(2+)</name>
        <dbReference type="ChEBI" id="CHEBI:29105"/>
    </ligand>
</feature>
<feature type="modified residue" description="Phosphoserine" evidence="3">
    <location>
        <position position="125"/>
    </location>
</feature>
<feature type="modified residue" description="Phosphoserine" evidence="3">
    <location>
        <position position="133"/>
    </location>
</feature>
<feature type="modified residue" description="N6-acetyllysine" evidence="3">
    <location>
        <position position="152"/>
    </location>
</feature>
<feature type="modified residue" description="N6-acetyllysine" evidence="3">
    <location>
        <position position="171"/>
    </location>
</feature>
<feature type="modified residue" description="Phosphoserine" evidence="3">
    <location>
        <position position="374"/>
    </location>
</feature>
<feature type="modified residue" description="Phosphoserine" evidence="3">
    <location>
        <position position="378"/>
    </location>
</feature>
<feature type="modified residue" description="Phosphoserine" evidence="2">
    <location>
        <position position="391"/>
    </location>
</feature>
<feature type="modified residue" description="Phosphoserine" evidence="3">
    <location>
        <position position="401"/>
    </location>
</feature>
<feature type="mutagenesis site" description="Strongly reduced ubiquitin binding. Loss of ubiquitin binding; when associated with D-58. Loss of ubiquitin ligase activity; when associated with A-26." evidence="8">
    <original>Y</original>
    <variation>A</variation>
    <variation>P</variation>
    <location>
        <position position="25"/>
    </location>
</feature>
<feature type="mutagenesis site" description="Strongly reduced ubiquitin binding. Loss of ubiquitin ligase activity; when associated with A-25." evidence="8">
    <original>Y</original>
    <variation>A</variation>
    <variation>P</variation>
    <location>
        <position position="26"/>
    </location>
</feature>
<feature type="mutagenesis site" description="Strongly reduced ubiquitin binding." evidence="8">
    <original>L</original>
    <variation>D</variation>
    <location>
        <position position="57"/>
    </location>
</feature>
<feature type="mutagenesis site" description="Strongly reduced ubiquitin binding. Loss of ubiquitin binding; when associated with A-25." evidence="8">
    <original>A</original>
    <variation>D</variation>
    <location>
        <position position="58"/>
    </location>
</feature>
<feature type="strand" evidence="10">
    <location>
        <begin position="23"/>
        <end position="26"/>
    </location>
</feature>
<feature type="helix" evidence="10">
    <location>
        <begin position="29"/>
        <end position="31"/>
    </location>
</feature>
<feature type="helix" evidence="10">
    <location>
        <begin position="36"/>
        <end position="70"/>
    </location>
</feature>
<gene>
    <name type="primary">RABGEF1</name>
    <name type="synonym">RABEX5</name>
</gene>